<keyword id="KW-0002">3D-structure</keyword>
<keyword id="KW-1283">Bacterial microcompartment</keyword>
<keyword id="KW-0120">Carbon dioxide fixation</keyword>
<keyword id="KW-1282">Carboxysome</keyword>
<keyword id="KW-0602">Photosynthesis</keyword>
<keyword id="KW-1185">Reference proteome</keyword>
<feature type="chain" id="PRO_0000451291" description="Carboxysome shell vertex protein CcmL">
    <location>
        <begin position="1"/>
        <end position="99"/>
    </location>
</feature>
<feature type="domain" description="BMV" evidence="3">
    <location>
        <begin position="1"/>
        <end position="83"/>
    </location>
</feature>
<feature type="strand" evidence="10">
    <location>
        <begin position="2"/>
        <end position="11"/>
    </location>
</feature>
<feature type="strand" evidence="10">
    <location>
        <begin position="13"/>
        <end position="15"/>
    </location>
</feature>
<feature type="helix" evidence="10">
    <location>
        <begin position="17"/>
        <end position="19"/>
    </location>
</feature>
<feature type="strand" evidence="10">
    <location>
        <begin position="24"/>
        <end position="30"/>
    </location>
</feature>
<feature type="strand" evidence="10">
    <location>
        <begin position="36"/>
        <end position="44"/>
    </location>
</feature>
<feature type="turn" evidence="11">
    <location>
        <begin position="49"/>
        <end position="53"/>
    </location>
</feature>
<feature type="strand" evidence="10">
    <location>
        <begin position="54"/>
        <end position="59"/>
    </location>
</feature>
<feature type="helix" evidence="10">
    <location>
        <begin position="60"/>
        <end position="65"/>
    </location>
</feature>
<feature type="strand" evidence="10">
    <location>
        <begin position="76"/>
        <end position="81"/>
    </location>
</feature>
<feature type="strand" evidence="10">
    <location>
        <begin position="83"/>
        <end position="90"/>
    </location>
</feature>
<feature type="strand" evidence="10">
    <location>
        <begin position="92"/>
        <end position="94"/>
    </location>
</feature>
<protein>
    <recommendedName>
        <fullName evidence="3">Carboxysome shell vertex protein CcmL</fullName>
    </recommendedName>
    <alternativeName>
        <fullName evidence="3">Carbon dioxide concentrating mechanism protein CcmL</fullName>
    </alternativeName>
</protein>
<comment type="function">
    <text evidence="1 3">Probably forms vertices in the carboxysome, a polyhedral inclusion where RuBisCO (ribulose bisphosphate carboxylase, rbcL-rbcS) is sequestered. Has been modeled to induce curvature upon insertion into an otherwise flat hexagonal molecular layer of CcmK subunits.</text>
</comment>
<comment type="subunit">
    <text evidence="1 4 5 7">Homopentamer (PubMed:23949415, PubMed:24504539). May interact with CcmK2, this occurs at very high CcmK2 concentrations (Probable). Interacts with full-length CcmM (By similarity).</text>
</comment>
<comment type="subcellular location">
    <subcellularLocation>
        <location evidence="2 3">Carboxysome</location>
    </subcellularLocation>
    <text evidence="6">This cyanobacterium makes beta-type carboxysomes (Probable). Probably forms vertices in the carboxysome (Probable).</text>
</comment>
<comment type="domain">
    <text evidence="3 4 5">The tight homopentamer forms a pore with an opening of 4-5 Angstroms in diameter which opens into a wider tunnel at the base of the truncated pyramid. The pore is positively charged.</text>
</comment>
<comment type="similarity">
    <text evidence="3">Belongs to the CcmL/EutN family. CcmL subfamily.</text>
</comment>
<reference key="1">
    <citation type="journal article" date="2002" name="DNA Res.">
        <title>Complete genome structure of the thermophilic cyanobacterium Thermosynechococcus elongatus BP-1.</title>
        <authorList>
            <person name="Nakamura Y."/>
            <person name="Kaneko T."/>
            <person name="Sato S."/>
            <person name="Ikeuchi M."/>
            <person name="Katoh H."/>
            <person name="Sasamoto S."/>
            <person name="Watanabe A."/>
            <person name="Iriguchi M."/>
            <person name="Kawashima K."/>
            <person name="Kimura T."/>
            <person name="Kishida Y."/>
            <person name="Kiyokawa C."/>
            <person name="Kohara M."/>
            <person name="Matsumoto M."/>
            <person name="Matsuno A."/>
            <person name="Nakazaki N."/>
            <person name="Shimpo S."/>
            <person name="Sugimoto M."/>
            <person name="Takeuchi C."/>
            <person name="Yamada M."/>
            <person name="Tabata S."/>
        </authorList>
    </citation>
    <scope>NUCLEOTIDE SEQUENCE [LARGE SCALE GENOMIC DNA]</scope>
    <source>
        <strain>NIES-2133 / IAM M-273 / BP-1</strain>
    </source>
</reference>
<reference evidence="8" key="2">
    <citation type="journal article" date="2013" name="Photosyn. Res.">
        <title>Two new high-resolution crystal structures of carboxysome pentamer proteins reveal high structural conservation of CcmL orthologs among distantly related cyanobacterial species.</title>
        <authorList>
            <person name="Sutter M."/>
            <person name="Wilson S.C."/>
            <person name="Deutsch S."/>
            <person name="Kerfeld C.A."/>
        </authorList>
    </citation>
    <scope>X-RAY CRYSTALLOGRAPHY (2.01 ANGSTROMS)</scope>
    <scope>SUBUNIT</scope>
    <scope>DOMAIN</scope>
</reference>
<reference evidence="9" key="3">
    <citation type="journal article" date="2014" name="Photosyn. Res.">
        <title>Interactions and structural variability of beta-carboxysomal shell protein CcmL.</title>
        <authorList>
            <person name="Keeling T.J."/>
            <person name="Samborska B."/>
            <person name="Demers R.W."/>
            <person name="Kimber M.S."/>
        </authorList>
    </citation>
    <scope>X-RAY CRYSTALLOGRAPHY (2.00 ANGSTROMS)</scope>
    <scope>SUBUNIT</scope>
    <scope>DOMAIN</scope>
    <source>
        <strain>NIES-2133 / IAM M-273 / BP-1</strain>
    </source>
</reference>
<proteinExistence type="evidence at protein level"/>
<evidence type="ECO:0000250" key="1">
    <source>
        <dbReference type="UniProtKB" id="P72759"/>
    </source>
</evidence>
<evidence type="ECO:0000250" key="2">
    <source>
        <dbReference type="UniProtKB" id="Q03512"/>
    </source>
</evidence>
<evidence type="ECO:0000255" key="3">
    <source>
        <dbReference type="HAMAP-Rule" id="MF_00858"/>
    </source>
</evidence>
<evidence type="ECO:0000269" key="4">
    <source>
    </source>
</evidence>
<evidence type="ECO:0000269" key="5">
    <source>
    </source>
</evidence>
<evidence type="ECO:0000305" key="6">
    <source>
    </source>
</evidence>
<evidence type="ECO:0000305" key="7">
    <source>
    </source>
</evidence>
<evidence type="ECO:0007744" key="8">
    <source>
        <dbReference type="PDB" id="4JVZ"/>
    </source>
</evidence>
<evidence type="ECO:0007744" key="9">
    <source>
        <dbReference type="PDB" id="4N8F"/>
    </source>
</evidence>
<evidence type="ECO:0007829" key="10">
    <source>
        <dbReference type="PDB" id="4N8F"/>
    </source>
</evidence>
<evidence type="ECO:0007829" key="11">
    <source>
        <dbReference type="PDB" id="7WKC"/>
    </source>
</evidence>
<dbReference type="EMBL" id="BA000039">
    <property type="protein sequence ID" value="BAC08497.1"/>
    <property type="molecule type" value="Genomic_DNA"/>
</dbReference>
<dbReference type="RefSeq" id="NP_681735.1">
    <property type="nucleotide sequence ID" value="NC_004113.1"/>
</dbReference>
<dbReference type="RefSeq" id="WP_011056789.1">
    <property type="nucleotide sequence ID" value="NC_004113.1"/>
</dbReference>
<dbReference type="PDB" id="4JVZ">
    <property type="method" value="X-ray"/>
    <property type="resolution" value="2.01 A"/>
    <property type="chains" value="A/B/C/D/E=1-99"/>
</dbReference>
<dbReference type="PDB" id="4N8F">
    <property type="method" value="X-ray"/>
    <property type="resolution" value="2.00 A"/>
    <property type="chains" value="A/B/C/D/E=1-99"/>
</dbReference>
<dbReference type="PDB" id="7WKC">
    <property type="method" value="NMR"/>
    <property type="chains" value="A/B/C/D/E=1-99"/>
</dbReference>
<dbReference type="PDBsum" id="4JVZ"/>
<dbReference type="PDBsum" id="4N8F"/>
<dbReference type="PDBsum" id="7WKC"/>
<dbReference type="SMR" id="Q8DKB4"/>
<dbReference type="STRING" id="197221.gene:10747537"/>
<dbReference type="EnsemblBacteria" id="BAC08497">
    <property type="protein sequence ID" value="BAC08497"/>
    <property type="gene ID" value="BAC08497"/>
</dbReference>
<dbReference type="KEGG" id="tel:tll0945"/>
<dbReference type="PATRIC" id="fig|197221.4.peg.992"/>
<dbReference type="eggNOG" id="COG4576">
    <property type="taxonomic scope" value="Bacteria"/>
</dbReference>
<dbReference type="EvolutionaryTrace" id="Q8DKB4"/>
<dbReference type="Proteomes" id="UP000000440">
    <property type="component" value="Chromosome"/>
</dbReference>
<dbReference type="GO" id="GO:0031470">
    <property type="term" value="C:carboxysome"/>
    <property type="evidence" value="ECO:0007669"/>
    <property type="project" value="UniProtKB-SubCell"/>
</dbReference>
<dbReference type="GO" id="GO:0043886">
    <property type="term" value="F:structural constituent of carboxysome shell"/>
    <property type="evidence" value="ECO:0007669"/>
    <property type="project" value="UniProtKB-UniRule"/>
</dbReference>
<dbReference type="GO" id="GO:0015977">
    <property type="term" value="P:carbon fixation"/>
    <property type="evidence" value="ECO:0007669"/>
    <property type="project" value="UniProtKB-UniRule"/>
</dbReference>
<dbReference type="GO" id="GO:0015979">
    <property type="term" value="P:photosynthesis"/>
    <property type="evidence" value="ECO:0007669"/>
    <property type="project" value="UniProtKB-KW"/>
</dbReference>
<dbReference type="CDD" id="cd01614">
    <property type="entry name" value="EutN_CcmL"/>
    <property type="match status" value="1"/>
</dbReference>
<dbReference type="Gene3D" id="2.40.50.220">
    <property type="entry name" value="EutN/Ccml"/>
    <property type="match status" value="1"/>
</dbReference>
<dbReference type="HAMAP" id="MF_00858">
    <property type="entry name" value="CcmL"/>
    <property type="match status" value="1"/>
</dbReference>
<dbReference type="InterPro" id="IPR046387">
    <property type="entry name" value="CcmL"/>
</dbReference>
<dbReference type="InterPro" id="IPR004992">
    <property type="entry name" value="EutN_CcmL"/>
</dbReference>
<dbReference type="InterPro" id="IPR036677">
    <property type="entry name" value="EutN_CcmL_sf"/>
</dbReference>
<dbReference type="PANTHER" id="PTHR36539:SF1">
    <property type="entry name" value="BACTERIAL MICROCOMPARTMENT SHELL VERTEX PROTEIN EUTN"/>
    <property type="match status" value="1"/>
</dbReference>
<dbReference type="PANTHER" id="PTHR36539">
    <property type="entry name" value="ETHANOLAMINE UTILIZATION PROTEIN EUTN"/>
    <property type="match status" value="1"/>
</dbReference>
<dbReference type="Pfam" id="PF03319">
    <property type="entry name" value="EutN_CcmL"/>
    <property type="match status" value="1"/>
</dbReference>
<dbReference type="SUPFAM" id="SSF159133">
    <property type="entry name" value="EutN/CcmL-like"/>
    <property type="match status" value="1"/>
</dbReference>
<dbReference type="PROSITE" id="PS51932">
    <property type="entry name" value="BMV"/>
    <property type="match status" value="1"/>
</dbReference>
<gene>
    <name evidence="3" type="primary">ccmL</name>
    <name type="ordered locus">tll0945</name>
</gene>
<name>CCML_THEVB</name>
<organism>
    <name type="scientific">Thermosynechococcus vestitus (strain NIES-2133 / IAM M-273 / BP-1)</name>
    <dbReference type="NCBI Taxonomy" id="197221"/>
    <lineage>
        <taxon>Bacteria</taxon>
        <taxon>Bacillati</taxon>
        <taxon>Cyanobacteriota</taxon>
        <taxon>Cyanophyceae</taxon>
        <taxon>Acaryochloridales</taxon>
        <taxon>Thermosynechococcaceae</taxon>
        <taxon>Thermosynechococcus</taxon>
    </lineage>
</organism>
<sequence length="99" mass="10840">MKIARVCGTVTSTQKEDTLTGVKFLVLQYLGEDGEFLPDYEVAADTVGAGQDEWVLVSRGSAARHIINGTDKPIDAAVVAIIDTVSRDNYLLYSKRTQY</sequence>
<accession>Q8DKB4</accession>